<protein>
    <recommendedName>
        <fullName>Tethering factor for nuclear proteasome STS1</fullName>
    </recommendedName>
</protein>
<gene>
    <name type="primary">STS1</name>
    <name type="ORF">CAWG_00447</name>
</gene>
<dbReference type="EMBL" id="CH672346">
    <property type="protein sequence ID" value="EEQ42243.1"/>
    <property type="molecule type" value="Genomic_DNA"/>
</dbReference>
<dbReference type="SMR" id="C4YD57"/>
<dbReference type="PaxDb" id="5476-C4YD57"/>
<dbReference type="VEuPathDB" id="FungiDB:CAWG_00447"/>
<dbReference type="HOGENOM" id="CLU_054606_2_0_1"/>
<dbReference type="OMA" id="DYTPHFL"/>
<dbReference type="OrthoDB" id="22307at766764"/>
<dbReference type="Proteomes" id="UP000001429">
    <property type="component" value="Chromosome 1, Supercontig 1.1"/>
</dbReference>
<dbReference type="GO" id="GO:0005737">
    <property type="term" value="C:cytoplasm"/>
    <property type="evidence" value="ECO:0007669"/>
    <property type="project" value="UniProtKB-SubCell"/>
</dbReference>
<dbReference type="GO" id="GO:0031965">
    <property type="term" value="C:nuclear membrane"/>
    <property type="evidence" value="ECO:0007669"/>
    <property type="project" value="TreeGrafter"/>
</dbReference>
<dbReference type="GO" id="GO:0070628">
    <property type="term" value="F:proteasome binding"/>
    <property type="evidence" value="ECO:0007669"/>
    <property type="project" value="TreeGrafter"/>
</dbReference>
<dbReference type="GO" id="GO:0071630">
    <property type="term" value="P:nuclear protein quality control by the ubiquitin-proteasome system"/>
    <property type="evidence" value="ECO:0007669"/>
    <property type="project" value="InterPro"/>
</dbReference>
<dbReference type="GO" id="GO:0031144">
    <property type="term" value="P:proteasome localization"/>
    <property type="evidence" value="ECO:0007669"/>
    <property type="project" value="InterPro"/>
</dbReference>
<dbReference type="GO" id="GO:0015031">
    <property type="term" value="P:protein transport"/>
    <property type="evidence" value="ECO:0007669"/>
    <property type="project" value="UniProtKB-KW"/>
</dbReference>
<dbReference type="FunFam" id="1.20.58.1590:FF:000005">
    <property type="entry name" value="Tethering factor for nuclear proteasome STS1"/>
    <property type="match status" value="1"/>
</dbReference>
<dbReference type="Gene3D" id="1.20.58.1590">
    <property type="entry name" value="Tethering factor for nuclear proteasome Cut8/Sts1"/>
    <property type="match status" value="1"/>
</dbReference>
<dbReference type="InterPro" id="IPR013868">
    <property type="entry name" value="Cut8/Sts1_fam"/>
</dbReference>
<dbReference type="InterPro" id="IPR038422">
    <property type="entry name" value="Cut8/Sts1_sf"/>
</dbReference>
<dbReference type="PANTHER" id="PTHR28032">
    <property type="entry name" value="FI02826P"/>
    <property type="match status" value="1"/>
</dbReference>
<dbReference type="PANTHER" id="PTHR28032:SF1">
    <property type="entry name" value="FI02826P"/>
    <property type="match status" value="1"/>
</dbReference>
<dbReference type="Pfam" id="PF08559">
    <property type="entry name" value="Cut8"/>
    <property type="match status" value="1"/>
</dbReference>
<proteinExistence type="inferred from homology"/>
<accession>C4YD57</accession>
<comment type="function">
    <text evidence="1">Involved in ubiquitin-mediated protein degradation. Regulatory factor in the ubiquitin/proteasome pathway that controls the turnover of proteasome substrates. Targets proteasomes to the nucleus and facilitates the degradation of nuclear proteins (By similarity).</text>
</comment>
<comment type="subunit">
    <text evidence="1">Binds the proteasome.</text>
</comment>
<comment type="subcellular location">
    <subcellularLocation>
        <location evidence="1">Cytoplasm</location>
    </subcellularLocation>
    <subcellularLocation>
        <location evidence="1">Nucleus</location>
    </subcellularLocation>
</comment>
<comment type="similarity">
    <text evidence="3">Belongs to the cut8/STS1 family.</text>
</comment>
<sequence length="327" mass="37321">MMSTNFQWPGTNKNDNTEVSVETPSSTDPHVPRYPFTAMSHATASTTMKKRKRDDFDGDKSTTITMNTTTTRKYIQSSLGSSKFKKAKTPKISGQPLPLPRLIESLDKSNLQKLVQDLITVHPELQSTLIKISPRPSIQDSIQLLQDKFDMIISHLPYKCDVESDYSYLRIKPHLQEFLSSVSDFILNYLPPLETNMTHSLQFLHETTKLVYNLPNFTNQEFQYTKSSALEQIANCWLIVLSQDEEKEGNTDVVKVIQELELLEKLHEHNEISFNKFEKVVDYCKDKLEQHELIMNNNEAGSGVTSSISDLITVDYSKYSIANTTSI</sequence>
<evidence type="ECO:0000250" key="1"/>
<evidence type="ECO:0000256" key="2">
    <source>
        <dbReference type="SAM" id="MobiDB-lite"/>
    </source>
</evidence>
<evidence type="ECO:0000305" key="3"/>
<name>STS1_CANAW</name>
<feature type="chain" id="PRO_0000409402" description="Tethering factor for nuclear proteasome STS1">
    <location>
        <begin position="1"/>
        <end position="327"/>
    </location>
</feature>
<feature type="region of interest" description="Disordered" evidence="2">
    <location>
        <begin position="1"/>
        <end position="63"/>
    </location>
</feature>
<feature type="compositionally biased region" description="Polar residues" evidence="2">
    <location>
        <begin position="1"/>
        <end position="28"/>
    </location>
</feature>
<feature type="compositionally biased region" description="Low complexity" evidence="2">
    <location>
        <begin position="37"/>
        <end position="47"/>
    </location>
</feature>
<organism>
    <name type="scientific">Candida albicans (strain WO-1)</name>
    <name type="common">Yeast</name>
    <dbReference type="NCBI Taxonomy" id="294748"/>
    <lineage>
        <taxon>Eukaryota</taxon>
        <taxon>Fungi</taxon>
        <taxon>Dikarya</taxon>
        <taxon>Ascomycota</taxon>
        <taxon>Saccharomycotina</taxon>
        <taxon>Pichiomycetes</taxon>
        <taxon>Debaryomycetaceae</taxon>
        <taxon>Candida/Lodderomyces clade</taxon>
        <taxon>Candida</taxon>
    </lineage>
</organism>
<keyword id="KW-0963">Cytoplasm</keyword>
<keyword id="KW-0539">Nucleus</keyword>
<keyword id="KW-0653">Protein transport</keyword>
<keyword id="KW-0813">Transport</keyword>
<reference key="1">
    <citation type="journal article" date="2009" name="Nature">
        <title>Evolution of pathogenicity and sexual reproduction in eight Candida genomes.</title>
        <authorList>
            <person name="Butler G."/>
            <person name="Rasmussen M.D."/>
            <person name="Lin M.F."/>
            <person name="Santos M.A.S."/>
            <person name="Sakthikumar S."/>
            <person name="Munro C.A."/>
            <person name="Rheinbay E."/>
            <person name="Grabherr M."/>
            <person name="Forche A."/>
            <person name="Reedy J.L."/>
            <person name="Agrafioti I."/>
            <person name="Arnaud M.B."/>
            <person name="Bates S."/>
            <person name="Brown A.J.P."/>
            <person name="Brunke S."/>
            <person name="Costanzo M.C."/>
            <person name="Fitzpatrick D.A."/>
            <person name="de Groot P.W.J."/>
            <person name="Harris D."/>
            <person name="Hoyer L.L."/>
            <person name="Hube B."/>
            <person name="Klis F.M."/>
            <person name="Kodira C."/>
            <person name="Lennard N."/>
            <person name="Logue M.E."/>
            <person name="Martin R."/>
            <person name="Neiman A.M."/>
            <person name="Nikolaou E."/>
            <person name="Quail M.A."/>
            <person name="Quinn J."/>
            <person name="Santos M.C."/>
            <person name="Schmitzberger F.F."/>
            <person name="Sherlock G."/>
            <person name="Shah P."/>
            <person name="Silverstein K.A.T."/>
            <person name="Skrzypek M.S."/>
            <person name="Soll D."/>
            <person name="Staggs R."/>
            <person name="Stansfield I."/>
            <person name="Stumpf M.P.H."/>
            <person name="Sudbery P.E."/>
            <person name="Srikantha T."/>
            <person name="Zeng Q."/>
            <person name="Berman J."/>
            <person name="Berriman M."/>
            <person name="Heitman J."/>
            <person name="Gow N.A.R."/>
            <person name="Lorenz M.C."/>
            <person name="Birren B.W."/>
            <person name="Kellis M."/>
            <person name="Cuomo C.A."/>
        </authorList>
    </citation>
    <scope>NUCLEOTIDE SEQUENCE [LARGE SCALE GENOMIC DNA]</scope>
    <source>
        <strain>WO-1</strain>
    </source>
</reference>